<evidence type="ECO:0000250" key="1"/>
<evidence type="ECO:0000250" key="2">
    <source>
        <dbReference type="UniProtKB" id="O54921"/>
    </source>
</evidence>
<evidence type="ECO:0000250" key="3">
    <source>
        <dbReference type="UniProtKB" id="Q9D4H1"/>
    </source>
</evidence>
<evidence type="ECO:0000255" key="4"/>
<evidence type="ECO:0000269" key="5">
    <source>
    </source>
</evidence>
<evidence type="ECO:0000269" key="6">
    <source>
    </source>
</evidence>
<evidence type="ECO:0000269" key="7">
    <source>
    </source>
</evidence>
<evidence type="ECO:0000269" key="8">
    <source>
    </source>
</evidence>
<evidence type="ECO:0000269" key="9">
    <source>
    </source>
</evidence>
<evidence type="ECO:0000305" key="10"/>
<evidence type="ECO:0007744" key="11">
    <source>
    </source>
</evidence>
<evidence type="ECO:0007744" key="12">
    <source>
    </source>
</evidence>
<accession>Q96KP1</accession>
<accession>B2RBE6</accession>
<accession>Q5JPC8</accession>
<accession>Q96AN6</accession>
<accession>Q9NUZ8</accession>
<accession>Q9UJM7</accession>
<comment type="function">
    <text evidence="5 9">Component of the exocyst complex involved in the docking of exocytic vesicles with fusion sites on the plasma membrane.</text>
</comment>
<comment type="subunit">
    <text evidence="2 3 5 7 8">The exocyst complex is composed of EXOC1, EXOC2, EXOC3, EXOC4, EXOC5, EXOC6, EXOC7 and EXOC8 (By similarity). Interacts with EXOC3L1 (By similarity). Interacts with GNEFR/DELGEF; this interaction occurs only in the presence of magnesium or manganese and is stimulated by dCTP or GTP (PubMed:12459492). Interacts with RALA and RALB (By similarity) (PubMed:12459492, PubMed:18756269, PubMed:19166349). Interacts with ARL13B; regulates ARL13B localization to the cilium membrane.</text>
</comment>
<comment type="interaction">
    <interactant intactId="EBI-465715">
        <id>Q96KP1</id>
    </interactant>
    <interactant intactId="EBI-1045313">
        <id>Q9NV70</id>
        <label>EXOC1</label>
    </interactant>
    <organismsDiffer>false</organismsDiffer>
    <experiments>7</experiments>
</comment>
<comment type="subcellular location">
    <subcellularLocation>
        <location evidence="6 7">Midbody</location>
        <location evidence="6 7">Midbody ring</location>
    </subcellularLocation>
    <text evidence="6 7">Recruitment to the midbody does not require RALA, nor RALB (PubMed:18756269). Colocalizes with CNTRL/centriolin at the midbody ring (PubMed:16213214).</text>
</comment>
<comment type="tissue specificity">
    <text evidence="5">Widely expressed with highest levels in brain and placenta.</text>
</comment>
<comment type="domain">
    <text evidence="1">Interacts with RALA through the TIG domain.</text>
</comment>
<comment type="disease" evidence="9">
    <disease id="DI-06096">
        <name>Neurodevelopmental disorder with dysmorphic facies and cerebellar hypoplasia</name>
        <acronym>NEDFACH</acronym>
        <description>An autosomal recessive disorder characterized by global developmental delay, intellectual disability, facial dysmorphism, and abnormalities of the cerebellum observed on brain imaging. Disease severity is variable. Some affected individuals have poor overall growth with microcephaly, delayed walking, spasticity, and poor or absent speech. Others may achieve more significant developmental milestones. Additional variable manifestations may include cardiac ventricular septal defect, spasticity, cataracts, optic nerve hypoplasia, seizures, and joint contractures.</description>
        <dbReference type="MIM" id="619306"/>
    </disease>
    <text>The disease is caused by variants affecting the gene represented in this entry.</text>
</comment>
<comment type="similarity">
    <text evidence="10">Belongs to the SEC5 family.</text>
</comment>
<comment type="sequence caution" evidence="10">
    <conflict type="erroneous initiation">
        <sequence resource="EMBL-CDS" id="BAA91963"/>
    </conflict>
    <text>Truncated N-terminus.</text>
</comment>
<gene>
    <name type="primary">EXOC2</name>
    <name type="synonym">SEC5</name>
    <name type="synonym">SEC5L1</name>
</gene>
<protein>
    <recommendedName>
        <fullName>Exocyst complex component 2</fullName>
    </recommendedName>
    <alternativeName>
        <fullName>Exocyst complex component Sec5</fullName>
    </alternativeName>
</protein>
<dbReference type="EMBL" id="AJ414403">
    <property type="protein sequence ID" value="CAC92092.1"/>
    <property type="molecule type" value="mRNA"/>
</dbReference>
<dbReference type="EMBL" id="AK001888">
    <property type="protein sequence ID" value="BAA91963.1"/>
    <property type="status" value="ALT_INIT"/>
    <property type="molecule type" value="mRNA"/>
</dbReference>
<dbReference type="EMBL" id="AK314628">
    <property type="protein sequence ID" value="BAG37193.1"/>
    <property type="molecule type" value="mRNA"/>
</dbReference>
<dbReference type="EMBL" id="AL833213">
    <property type="protein sequence ID" value="CAI46189.1"/>
    <property type="molecule type" value="mRNA"/>
</dbReference>
<dbReference type="EMBL" id="AL031770">
    <property type="status" value="NOT_ANNOTATED_CDS"/>
    <property type="molecule type" value="Genomic_DNA"/>
</dbReference>
<dbReference type="EMBL" id="AL512308">
    <property type="status" value="NOT_ANNOTATED_CDS"/>
    <property type="molecule type" value="Genomic_DNA"/>
</dbReference>
<dbReference type="EMBL" id="BC016918">
    <property type="protein sequence ID" value="AAH16918.2"/>
    <property type="molecule type" value="mRNA"/>
</dbReference>
<dbReference type="EMBL" id="BC080542">
    <property type="protein sequence ID" value="AAH80542.1"/>
    <property type="molecule type" value="mRNA"/>
</dbReference>
<dbReference type="CCDS" id="CCDS34327.1"/>
<dbReference type="RefSeq" id="NP_060773.3">
    <property type="nucleotide sequence ID" value="NM_018303.5"/>
</dbReference>
<dbReference type="RefSeq" id="XP_016866507.1">
    <property type="nucleotide sequence ID" value="XM_017011018.1"/>
</dbReference>
<dbReference type="RefSeq" id="XP_016866508.1">
    <property type="nucleotide sequence ID" value="XM_017011019.1"/>
</dbReference>
<dbReference type="RefSeq" id="XP_016866509.1">
    <property type="nucleotide sequence ID" value="XM_017011020.1"/>
</dbReference>
<dbReference type="RefSeq" id="XP_016866510.1">
    <property type="nucleotide sequence ID" value="XM_017011021.1"/>
</dbReference>
<dbReference type="RefSeq" id="XP_016866511.1">
    <property type="nucleotide sequence ID" value="XM_017011022.2"/>
</dbReference>
<dbReference type="RefSeq" id="XP_016866512.1">
    <property type="nucleotide sequence ID" value="XM_017011023.2"/>
</dbReference>
<dbReference type="RefSeq" id="XP_016866513.1">
    <property type="nucleotide sequence ID" value="XM_017011024.2"/>
</dbReference>
<dbReference type="RefSeq" id="XP_047274963.1">
    <property type="nucleotide sequence ID" value="XM_047419007.1"/>
</dbReference>
<dbReference type="RefSeq" id="XP_047274964.1">
    <property type="nucleotide sequence ID" value="XM_047419008.1"/>
</dbReference>
<dbReference type="RefSeq" id="XP_047274965.1">
    <property type="nucleotide sequence ID" value="XM_047419009.1"/>
</dbReference>
<dbReference type="RefSeq" id="XP_047274966.1">
    <property type="nucleotide sequence ID" value="XM_047419010.1"/>
</dbReference>
<dbReference type="RefSeq" id="XP_047274967.1">
    <property type="nucleotide sequence ID" value="XM_047419011.1"/>
</dbReference>
<dbReference type="RefSeq" id="XP_047274968.1">
    <property type="nucleotide sequence ID" value="XM_047419012.1"/>
</dbReference>
<dbReference type="RefSeq" id="XP_047274969.1">
    <property type="nucleotide sequence ID" value="XM_047419013.1"/>
</dbReference>
<dbReference type="RefSeq" id="XP_047274970.1">
    <property type="nucleotide sequence ID" value="XM_047419014.1"/>
</dbReference>
<dbReference type="RefSeq" id="XP_047274971.1">
    <property type="nucleotide sequence ID" value="XM_047419015.1"/>
</dbReference>
<dbReference type="RefSeq" id="XP_054211821.1">
    <property type="nucleotide sequence ID" value="XM_054355846.1"/>
</dbReference>
<dbReference type="RefSeq" id="XP_054211822.1">
    <property type="nucleotide sequence ID" value="XM_054355847.1"/>
</dbReference>
<dbReference type="RefSeq" id="XP_054211823.1">
    <property type="nucleotide sequence ID" value="XM_054355848.1"/>
</dbReference>
<dbReference type="RefSeq" id="XP_054211824.1">
    <property type="nucleotide sequence ID" value="XM_054355849.1"/>
</dbReference>
<dbReference type="RefSeq" id="XP_054211825.1">
    <property type="nucleotide sequence ID" value="XM_054355850.1"/>
</dbReference>
<dbReference type="RefSeq" id="XP_054211826.1">
    <property type="nucleotide sequence ID" value="XM_054355851.1"/>
</dbReference>
<dbReference type="RefSeq" id="XP_054211827.1">
    <property type="nucleotide sequence ID" value="XM_054355852.1"/>
</dbReference>
<dbReference type="RefSeq" id="XP_054211828.1">
    <property type="nucleotide sequence ID" value="XM_054355853.1"/>
</dbReference>
<dbReference type="RefSeq" id="XP_054211829.1">
    <property type="nucleotide sequence ID" value="XM_054355854.1"/>
</dbReference>
<dbReference type="RefSeq" id="XP_054211830.1">
    <property type="nucleotide sequence ID" value="XM_054355855.1"/>
</dbReference>
<dbReference type="RefSeq" id="XP_054211831.1">
    <property type="nucleotide sequence ID" value="XM_054355856.1"/>
</dbReference>
<dbReference type="RefSeq" id="XP_054211832.1">
    <property type="nucleotide sequence ID" value="XM_054355857.1"/>
</dbReference>
<dbReference type="SMR" id="Q96KP1"/>
<dbReference type="BioGRID" id="120887">
    <property type="interactions" value="106"/>
</dbReference>
<dbReference type="ComplexPortal" id="CPX-4943">
    <property type="entry name" value="Exocyst, EXOC6 variant"/>
</dbReference>
<dbReference type="ComplexPortal" id="CPX-4944">
    <property type="entry name" value="Exocyst, EXOC6B variant"/>
</dbReference>
<dbReference type="CORUM" id="Q96KP1"/>
<dbReference type="DIP" id="DIP-31795N"/>
<dbReference type="FunCoup" id="Q96KP1">
    <property type="interactions" value="3093"/>
</dbReference>
<dbReference type="IntAct" id="Q96KP1">
    <property type="interactions" value="53"/>
</dbReference>
<dbReference type="MINT" id="Q96KP1"/>
<dbReference type="STRING" id="9606.ENSP00000230449"/>
<dbReference type="TCDB" id="1.F.2.1.2">
    <property type="family name" value="the octameric exocyst (exocyst) family"/>
</dbReference>
<dbReference type="iPTMnet" id="Q96KP1"/>
<dbReference type="PhosphoSitePlus" id="Q96KP1"/>
<dbReference type="SwissPalm" id="Q96KP1"/>
<dbReference type="BioMuta" id="EXOC2"/>
<dbReference type="DMDM" id="24638219"/>
<dbReference type="jPOST" id="Q96KP1"/>
<dbReference type="MassIVE" id="Q96KP1"/>
<dbReference type="PaxDb" id="9606-ENSP00000230449"/>
<dbReference type="PeptideAtlas" id="Q96KP1"/>
<dbReference type="ProteomicsDB" id="77097"/>
<dbReference type="Pumba" id="Q96KP1"/>
<dbReference type="Antibodypedia" id="24190">
    <property type="antibodies" value="143 antibodies from 28 providers"/>
</dbReference>
<dbReference type="DNASU" id="55770"/>
<dbReference type="Ensembl" id="ENST00000230449.9">
    <property type="protein sequence ID" value="ENSP00000230449.4"/>
    <property type="gene ID" value="ENSG00000112685.14"/>
</dbReference>
<dbReference type="GeneID" id="55770"/>
<dbReference type="KEGG" id="hsa:55770"/>
<dbReference type="MANE-Select" id="ENST00000230449.9">
    <property type="protein sequence ID" value="ENSP00000230449.4"/>
    <property type="RefSeq nucleotide sequence ID" value="NM_018303.6"/>
    <property type="RefSeq protein sequence ID" value="NP_060773.3"/>
</dbReference>
<dbReference type="UCSC" id="uc003mtd.5">
    <property type="organism name" value="human"/>
</dbReference>
<dbReference type="AGR" id="HGNC:24968"/>
<dbReference type="CTD" id="55770"/>
<dbReference type="DisGeNET" id="55770"/>
<dbReference type="GeneCards" id="EXOC2"/>
<dbReference type="HGNC" id="HGNC:24968">
    <property type="gene designation" value="EXOC2"/>
</dbReference>
<dbReference type="HPA" id="ENSG00000112685">
    <property type="expression patterns" value="Low tissue specificity"/>
</dbReference>
<dbReference type="MalaCards" id="EXOC2"/>
<dbReference type="MIM" id="615329">
    <property type="type" value="gene"/>
</dbReference>
<dbReference type="MIM" id="619306">
    <property type="type" value="phenotype"/>
</dbReference>
<dbReference type="neXtProt" id="NX_Q96KP1"/>
<dbReference type="OpenTargets" id="ENSG00000112685"/>
<dbReference type="PharmGKB" id="PA134862170"/>
<dbReference type="VEuPathDB" id="HostDB:ENSG00000112685"/>
<dbReference type="eggNOG" id="KOG2347">
    <property type="taxonomic scope" value="Eukaryota"/>
</dbReference>
<dbReference type="GeneTree" id="ENSGT00390000010872"/>
<dbReference type="HOGENOM" id="CLU_005811_0_0_1"/>
<dbReference type="InParanoid" id="Q96KP1"/>
<dbReference type="OMA" id="RMWMDVD"/>
<dbReference type="OrthoDB" id="26242at2759"/>
<dbReference type="PAN-GO" id="Q96KP1">
    <property type="GO annotations" value="3 GO annotations based on evolutionary models"/>
</dbReference>
<dbReference type="PhylomeDB" id="Q96KP1"/>
<dbReference type="TreeFam" id="TF105891"/>
<dbReference type="PathwayCommons" id="Q96KP1"/>
<dbReference type="Reactome" id="R-HSA-1445148">
    <property type="pathway name" value="Translocation of SLC2A4 (GLUT4) to the plasma membrane"/>
</dbReference>
<dbReference type="Reactome" id="R-HSA-264876">
    <property type="pathway name" value="Insulin processing"/>
</dbReference>
<dbReference type="Reactome" id="R-HSA-5620916">
    <property type="pathway name" value="VxPx cargo-targeting to cilium"/>
</dbReference>
<dbReference type="SignaLink" id="Q96KP1"/>
<dbReference type="SIGNOR" id="Q96KP1"/>
<dbReference type="BioGRID-ORCS" id="55770">
    <property type="hits" value="267 hits in 1183 CRISPR screens"/>
</dbReference>
<dbReference type="CD-CODE" id="FB4E32DD">
    <property type="entry name" value="Presynaptic clusters and postsynaptic densities"/>
</dbReference>
<dbReference type="ChiTaRS" id="EXOC2">
    <property type="organism name" value="human"/>
</dbReference>
<dbReference type="GeneWiki" id="EXOC2"/>
<dbReference type="GenomeRNAi" id="55770"/>
<dbReference type="Pharos" id="Q96KP1">
    <property type="development level" value="Tbio"/>
</dbReference>
<dbReference type="PRO" id="PR:Q96KP1"/>
<dbReference type="Proteomes" id="UP000005640">
    <property type="component" value="Chromosome 6"/>
</dbReference>
<dbReference type="RNAct" id="Q96KP1">
    <property type="molecule type" value="protein"/>
</dbReference>
<dbReference type="Bgee" id="ENSG00000112685">
    <property type="expression patterns" value="Expressed in male germ line stem cell (sensu Vertebrata) in testis and 171 other cell types or tissues"/>
</dbReference>
<dbReference type="ExpressionAtlas" id="Q96KP1">
    <property type="expression patterns" value="baseline and differential"/>
</dbReference>
<dbReference type="GO" id="GO:0005829">
    <property type="term" value="C:cytosol"/>
    <property type="evidence" value="ECO:0000304"/>
    <property type="project" value="Reactome"/>
</dbReference>
<dbReference type="GO" id="GO:0000145">
    <property type="term" value="C:exocyst"/>
    <property type="evidence" value="ECO:0000314"/>
    <property type="project" value="UniProtKB"/>
</dbReference>
<dbReference type="GO" id="GO:0090543">
    <property type="term" value="C:Flemming body"/>
    <property type="evidence" value="ECO:0007669"/>
    <property type="project" value="UniProtKB-SubCell"/>
</dbReference>
<dbReference type="GO" id="GO:0016020">
    <property type="term" value="C:membrane"/>
    <property type="evidence" value="ECO:0007005"/>
    <property type="project" value="UniProtKB"/>
</dbReference>
<dbReference type="GO" id="GO:0005886">
    <property type="term" value="C:plasma membrane"/>
    <property type="evidence" value="ECO:0000304"/>
    <property type="project" value="Reactome"/>
</dbReference>
<dbReference type="GO" id="GO:0019901">
    <property type="term" value="F:protein kinase binding"/>
    <property type="evidence" value="ECO:0000353"/>
    <property type="project" value="UniProtKB"/>
</dbReference>
<dbReference type="GO" id="GO:0031267">
    <property type="term" value="F:small GTPase binding"/>
    <property type="evidence" value="ECO:0000353"/>
    <property type="project" value="UniProtKB"/>
</dbReference>
<dbReference type="GO" id="GO:0006887">
    <property type="term" value="P:exocytosis"/>
    <property type="evidence" value="ECO:0000318"/>
    <property type="project" value="GO_Central"/>
</dbReference>
<dbReference type="GO" id="GO:0006893">
    <property type="term" value="P:Golgi to plasma membrane transport"/>
    <property type="evidence" value="ECO:0000315"/>
    <property type="project" value="UniProtKB"/>
</dbReference>
<dbReference type="GO" id="GO:0090148">
    <property type="term" value="P:membrane fission"/>
    <property type="evidence" value="ECO:0000303"/>
    <property type="project" value="ComplexPortal"/>
</dbReference>
<dbReference type="GO" id="GO:0000281">
    <property type="term" value="P:mitotic cytokinesis"/>
    <property type="evidence" value="ECO:0000303"/>
    <property type="project" value="ComplexPortal"/>
</dbReference>
<dbReference type="GO" id="GO:0015031">
    <property type="term" value="P:protein transport"/>
    <property type="evidence" value="ECO:0007669"/>
    <property type="project" value="UniProtKB-KW"/>
</dbReference>
<dbReference type="GO" id="GO:2000535">
    <property type="term" value="P:regulation of entry of bacterium into host cell"/>
    <property type="evidence" value="ECO:0000315"/>
    <property type="project" value="AgBase"/>
</dbReference>
<dbReference type="GO" id="GO:0006904">
    <property type="term" value="P:vesicle docking involved in exocytosis"/>
    <property type="evidence" value="ECO:0000314"/>
    <property type="project" value="UniProtKB"/>
</dbReference>
<dbReference type="GO" id="GO:0090522">
    <property type="term" value="P:vesicle tethering involved in exocytosis"/>
    <property type="evidence" value="ECO:0000303"/>
    <property type="project" value="ComplexPortal"/>
</dbReference>
<dbReference type="CDD" id="cd00603">
    <property type="entry name" value="IPT_PCSR"/>
    <property type="match status" value="1"/>
</dbReference>
<dbReference type="FunFam" id="2.60.40.10:FF:000196">
    <property type="entry name" value="Exocyst complex component 2"/>
    <property type="match status" value="1"/>
</dbReference>
<dbReference type="Gene3D" id="2.60.40.10">
    <property type="entry name" value="Immunoglobulins"/>
    <property type="match status" value="1"/>
</dbReference>
<dbReference type="InterPro" id="IPR029175">
    <property type="entry name" value="EXOC2/Sec5"/>
</dbReference>
<dbReference type="InterPro" id="IPR039481">
    <property type="entry name" value="EXOC2/Sec5_N_dom"/>
</dbReference>
<dbReference type="InterPro" id="IPR013783">
    <property type="entry name" value="Ig-like_fold"/>
</dbReference>
<dbReference type="InterPro" id="IPR014756">
    <property type="entry name" value="Ig_E-set"/>
</dbReference>
<dbReference type="InterPro" id="IPR002909">
    <property type="entry name" value="IPT_dom"/>
</dbReference>
<dbReference type="PANTHER" id="PTHR13043:SF1">
    <property type="entry name" value="EXOCYST COMPLEX COMPONENT 2"/>
    <property type="match status" value="1"/>
</dbReference>
<dbReference type="PANTHER" id="PTHR13043">
    <property type="entry name" value="EXOCYST COMPLEX COMPONENT SEC5"/>
    <property type="match status" value="1"/>
</dbReference>
<dbReference type="Pfam" id="PF15469">
    <property type="entry name" value="Sec5"/>
    <property type="match status" value="1"/>
</dbReference>
<dbReference type="Pfam" id="PF01833">
    <property type="entry name" value="TIG"/>
    <property type="match status" value="1"/>
</dbReference>
<dbReference type="SUPFAM" id="SSF81296">
    <property type="entry name" value="E set domains"/>
    <property type="match status" value="1"/>
</dbReference>
<sequence>MSRSRQPPLVTGISPNEGIPWTKVTIRGENLGTGPTDLIGLTICGHNCLLTAEWMSASKIVCRVGQAKNDKGDIIVTTKSGGRGTSTVSFKLLKPEKIGILDQSAVWVDEMNYYDMRTDRNKGIPPLSLRPANPLGIEIEKSKFSQKDLEMLFHGMSADFTSENFSAAWYLIENHSNTSFEQLKMAVTNLKRQANKKSEGSLAYVKGGLSTFFEAQDALSAIHQKLEADGTEKVEGSMTQKLENVLNRASNTADTLFQEVLGRKDKADSTRNALNVLQRFKFLFNLPLNIERNIQKGDYDVVINDYEKAKSLFGKTEVQVFKKYYAEVETRIEALRELLLDKLLETPSTLHDQKRYIRYLSDLHASGDPAWQCIGAQHKWILQLMHSCKEGYVKDLKGNPGLHSPMLDLDNDTRPSVLGHLSQTASLKRGSSFQSGRDDTWRYKTPHRVAFVEKLTKLVLSQLPNFWKLWISYVNGSLFSETAEKSGQIERSKNVRQRQNDFKKMIQEVMHSLVKLTRGALLPLSIRDGEAKQYGGWEVKCELSGQWLAHAIQTVRLTHESLTALEIPNDLLQTIQDLILDLRVRCVMATLQHTAEEIKRLAEKEDWIVDNEGLTSLPCQFEQCIVCSLQSLKGVLECKPGEASVFQQPKTQEEVCQLSINIMQVFIYCLEQLSTKPDADIDTTHLSVDVSSPDLFGSIHEDFSLTSEQRLLIVLSNCCYLERHTFLNIAEHFEKHNFQGIEKITQVSMASLKELDQRLFENYIELKADPIVGSLEPGIYAGYFDWKDCLPPTGVRNYLKEALVNIIAVHAEVFTISKELVPRVLSKVIEAVSEELSRLMQCVSSFSKNGALQARLEICALRDTVAVYLTPESKSSFKQALEALPQLSSGADKKLLEELLNKFKSSMHLQLTCFQAASSTMMKT</sequence>
<proteinExistence type="evidence at protein level"/>
<name>EXOC2_HUMAN</name>
<keyword id="KW-0007">Acetylation</keyword>
<keyword id="KW-0175">Coiled coil</keyword>
<keyword id="KW-0225">Disease variant</keyword>
<keyword id="KW-0268">Exocytosis</keyword>
<keyword id="KW-0991">Intellectual disability</keyword>
<keyword id="KW-0523">Neurodegeneration</keyword>
<keyword id="KW-0597">Phosphoprotein</keyword>
<keyword id="KW-0653">Protein transport</keyword>
<keyword id="KW-1267">Proteomics identification</keyword>
<keyword id="KW-1185">Reference proteome</keyword>
<keyword id="KW-0813">Transport</keyword>
<feature type="chain" id="PRO_0000118918" description="Exocyst complex component 2">
    <location>
        <begin position="1"/>
        <end position="924"/>
    </location>
</feature>
<feature type="domain" description="IPT/TIG">
    <location>
        <begin position="8"/>
        <end position="93"/>
    </location>
</feature>
<feature type="coiled-coil region" evidence="4">
    <location>
        <begin position="240"/>
        <end position="260"/>
    </location>
</feature>
<feature type="modified residue" description="Phosphoserine" evidence="12">
    <location>
        <position position="431"/>
    </location>
</feature>
<feature type="modified residue" description="Phosphoserine" evidence="12">
    <location>
        <position position="432"/>
    </location>
</feature>
<feature type="modified residue" description="Phosphoserine" evidence="12">
    <location>
        <position position="435"/>
    </location>
</feature>
<feature type="modified residue" description="Phosphothreonine" evidence="12">
    <location>
        <position position="440"/>
    </location>
</feature>
<feature type="modified residue" description="N6-acetyllysine" evidence="11">
    <location>
        <position position="454"/>
    </location>
</feature>
<feature type="modified residue" description="Phosphoserine" evidence="12">
    <location>
        <position position="888"/>
    </location>
</feature>
<feature type="sequence variant" id="VAR_085744" description="In NEDFACH; uncertain significance; no effect on protein abundance; dbSNP:rs138470165." evidence="9">
    <original>R</original>
    <variation>H</variation>
    <location>
        <position position="130"/>
    </location>
</feature>
<feature type="sequence variant" id="VAR_048956" description="In dbSNP:rs35600069.">
    <original>N</original>
    <variation>T</variation>
    <location>
        <position position="195"/>
    </location>
</feature>
<feature type="sequence variant" id="VAR_085745" description="In NEDFACH; decreased protein abundance; shows defective ARL13B cilium membrane localization." evidence="9">
    <location>
        <begin position="437"/>
        <end position="924"/>
    </location>
</feature>
<feature type="sequence variant" id="VAR_085746" description="In NEDFACH; uncertain significance; no effect on protein abundance; dbSNP:rs2127584790." evidence="9">
    <original>L</original>
    <variation>S</variation>
    <location>
        <position position="580"/>
    </location>
</feature>
<feature type="mutagenesis site" description="Impaired cytokinesis. Loss of RALA-binding. No change in localization to the midbody during cytokinesis." evidence="7">
    <original>T</original>
    <variation>A</variation>
    <location>
        <position position="11"/>
    </location>
</feature>
<feature type="sequence conflict" description="In Ref. 2; BAG37193." evidence="10" ref="2">
    <original>I</original>
    <variation>K</variation>
    <location>
        <position position="19"/>
    </location>
</feature>
<feature type="sequence conflict" description="In Ref. 2; BAA91963." evidence="10" ref="2">
    <original>L</original>
    <variation>H</variation>
    <location>
        <position position="522"/>
    </location>
</feature>
<reference key="1">
    <citation type="journal article" date="2002" name="FEBS Lett.">
        <title>DelGEF, a homologue of the Ran guanine nucleotide exchange factor RanGEF, binds to the exocyst component Sec5 and modulates secretion.</title>
        <authorList>
            <person name="Sjoelinder M."/>
            <person name="Uhlmann J."/>
            <person name="Ponstingl H."/>
        </authorList>
    </citation>
    <scope>NUCLEOTIDE SEQUENCE [MRNA]</scope>
    <scope>TISSUE SPECIFICITY</scope>
    <scope>INTERACTION WITH GNEFR</scope>
    <scope>FUNCTION</scope>
</reference>
<reference key="2">
    <citation type="journal article" date="2004" name="Nat. Genet.">
        <title>Complete sequencing and characterization of 21,243 full-length human cDNAs.</title>
        <authorList>
            <person name="Ota T."/>
            <person name="Suzuki Y."/>
            <person name="Nishikawa T."/>
            <person name="Otsuki T."/>
            <person name="Sugiyama T."/>
            <person name="Irie R."/>
            <person name="Wakamatsu A."/>
            <person name="Hayashi K."/>
            <person name="Sato H."/>
            <person name="Nagai K."/>
            <person name="Kimura K."/>
            <person name="Makita H."/>
            <person name="Sekine M."/>
            <person name="Obayashi M."/>
            <person name="Nishi T."/>
            <person name="Shibahara T."/>
            <person name="Tanaka T."/>
            <person name="Ishii S."/>
            <person name="Yamamoto J."/>
            <person name="Saito K."/>
            <person name="Kawai Y."/>
            <person name="Isono Y."/>
            <person name="Nakamura Y."/>
            <person name="Nagahari K."/>
            <person name="Murakami K."/>
            <person name="Yasuda T."/>
            <person name="Iwayanagi T."/>
            <person name="Wagatsuma M."/>
            <person name="Shiratori A."/>
            <person name="Sudo H."/>
            <person name="Hosoiri T."/>
            <person name="Kaku Y."/>
            <person name="Kodaira H."/>
            <person name="Kondo H."/>
            <person name="Sugawara M."/>
            <person name="Takahashi M."/>
            <person name="Kanda K."/>
            <person name="Yokoi T."/>
            <person name="Furuya T."/>
            <person name="Kikkawa E."/>
            <person name="Omura Y."/>
            <person name="Abe K."/>
            <person name="Kamihara K."/>
            <person name="Katsuta N."/>
            <person name="Sato K."/>
            <person name="Tanikawa M."/>
            <person name="Yamazaki M."/>
            <person name="Ninomiya K."/>
            <person name="Ishibashi T."/>
            <person name="Yamashita H."/>
            <person name="Murakawa K."/>
            <person name="Fujimori K."/>
            <person name="Tanai H."/>
            <person name="Kimata M."/>
            <person name="Watanabe M."/>
            <person name="Hiraoka S."/>
            <person name="Chiba Y."/>
            <person name="Ishida S."/>
            <person name="Ono Y."/>
            <person name="Takiguchi S."/>
            <person name="Watanabe S."/>
            <person name="Yosida M."/>
            <person name="Hotuta T."/>
            <person name="Kusano J."/>
            <person name="Kanehori K."/>
            <person name="Takahashi-Fujii A."/>
            <person name="Hara H."/>
            <person name="Tanase T.-O."/>
            <person name="Nomura Y."/>
            <person name="Togiya S."/>
            <person name="Komai F."/>
            <person name="Hara R."/>
            <person name="Takeuchi K."/>
            <person name="Arita M."/>
            <person name="Imose N."/>
            <person name="Musashino K."/>
            <person name="Yuuki H."/>
            <person name="Oshima A."/>
            <person name="Sasaki N."/>
            <person name="Aotsuka S."/>
            <person name="Yoshikawa Y."/>
            <person name="Matsunawa H."/>
            <person name="Ichihara T."/>
            <person name="Shiohata N."/>
            <person name="Sano S."/>
            <person name="Moriya S."/>
            <person name="Momiyama H."/>
            <person name="Satoh N."/>
            <person name="Takami S."/>
            <person name="Terashima Y."/>
            <person name="Suzuki O."/>
            <person name="Nakagawa S."/>
            <person name="Senoh A."/>
            <person name="Mizoguchi H."/>
            <person name="Goto Y."/>
            <person name="Shimizu F."/>
            <person name="Wakebe H."/>
            <person name="Hishigaki H."/>
            <person name="Watanabe T."/>
            <person name="Sugiyama A."/>
            <person name="Takemoto M."/>
            <person name="Kawakami B."/>
            <person name="Yamazaki M."/>
            <person name="Watanabe K."/>
            <person name="Kumagai A."/>
            <person name="Itakura S."/>
            <person name="Fukuzumi Y."/>
            <person name="Fujimori Y."/>
            <person name="Komiyama M."/>
            <person name="Tashiro H."/>
            <person name="Tanigami A."/>
            <person name="Fujiwara T."/>
            <person name="Ono T."/>
            <person name="Yamada K."/>
            <person name="Fujii Y."/>
            <person name="Ozaki K."/>
            <person name="Hirao M."/>
            <person name="Ohmori Y."/>
            <person name="Kawabata A."/>
            <person name="Hikiji T."/>
            <person name="Kobatake N."/>
            <person name="Inagaki H."/>
            <person name="Ikema Y."/>
            <person name="Okamoto S."/>
            <person name="Okitani R."/>
            <person name="Kawakami T."/>
            <person name="Noguchi S."/>
            <person name="Itoh T."/>
            <person name="Shigeta K."/>
            <person name="Senba T."/>
            <person name="Matsumura K."/>
            <person name="Nakajima Y."/>
            <person name="Mizuno T."/>
            <person name="Morinaga M."/>
            <person name="Sasaki M."/>
            <person name="Togashi T."/>
            <person name="Oyama M."/>
            <person name="Hata H."/>
            <person name="Watanabe M."/>
            <person name="Komatsu T."/>
            <person name="Mizushima-Sugano J."/>
            <person name="Satoh T."/>
            <person name="Shirai Y."/>
            <person name="Takahashi Y."/>
            <person name="Nakagawa K."/>
            <person name="Okumura K."/>
            <person name="Nagase T."/>
            <person name="Nomura N."/>
            <person name="Kikuchi H."/>
            <person name="Masuho Y."/>
            <person name="Yamashita R."/>
            <person name="Nakai K."/>
            <person name="Yada T."/>
            <person name="Nakamura Y."/>
            <person name="Ohara O."/>
            <person name="Isogai T."/>
            <person name="Sugano S."/>
        </authorList>
    </citation>
    <scope>NUCLEOTIDE SEQUENCE [LARGE SCALE MRNA]</scope>
    <source>
        <tissue>Placenta</tissue>
    </source>
</reference>
<reference key="3">
    <citation type="journal article" date="2007" name="BMC Genomics">
        <title>The full-ORF clone resource of the German cDNA consortium.</title>
        <authorList>
            <person name="Bechtel S."/>
            <person name="Rosenfelder H."/>
            <person name="Duda A."/>
            <person name="Schmidt C.P."/>
            <person name="Ernst U."/>
            <person name="Wellenreuther R."/>
            <person name="Mehrle A."/>
            <person name="Schuster C."/>
            <person name="Bahr A."/>
            <person name="Bloecker H."/>
            <person name="Heubner D."/>
            <person name="Hoerlein A."/>
            <person name="Michel G."/>
            <person name="Wedler H."/>
            <person name="Koehrer K."/>
            <person name="Ottenwaelder B."/>
            <person name="Poustka A."/>
            <person name="Wiemann S."/>
            <person name="Schupp I."/>
        </authorList>
    </citation>
    <scope>NUCLEOTIDE SEQUENCE [LARGE SCALE MRNA]</scope>
    <source>
        <tissue>Lymph node</tissue>
    </source>
</reference>
<reference key="4">
    <citation type="journal article" date="2003" name="Nature">
        <title>The DNA sequence and analysis of human chromosome 6.</title>
        <authorList>
            <person name="Mungall A.J."/>
            <person name="Palmer S.A."/>
            <person name="Sims S.K."/>
            <person name="Edwards C.A."/>
            <person name="Ashurst J.L."/>
            <person name="Wilming L."/>
            <person name="Jones M.C."/>
            <person name="Horton R."/>
            <person name="Hunt S.E."/>
            <person name="Scott C.E."/>
            <person name="Gilbert J.G.R."/>
            <person name="Clamp M.E."/>
            <person name="Bethel G."/>
            <person name="Milne S."/>
            <person name="Ainscough R."/>
            <person name="Almeida J.P."/>
            <person name="Ambrose K.D."/>
            <person name="Andrews T.D."/>
            <person name="Ashwell R.I.S."/>
            <person name="Babbage A.K."/>
            <person name="Bagguley C.L."/>
            <person name="Bailey J."/>
            <person name="Banerjee R."/>
            <person name="Barker D.J."/>
            <person name="Barlow K.F."/>
            <person name="Bates K."/>
            <person name="Beare D.M."/>
            <person name="Beasley H."/>
            <person name="Beasley O."/>
            <person name="Bird C.P."/>
            <person name="Blakey S.E."/>
            <person name="Bray-Allen S."/>
            <person name="Brook J."/>
            <person name="Brown A.J."/>
            <person name="Brown J.Y."/>
            <person name="Burford D.C."/>
            <person name="Burrill W."/>
            <person name="Burton J."/>
            <person name="Carder C."/>
            <person name="Carter N.P."/>
            <person name="Chapman J.C."/>
            <person name="Clark S.Y."/>
            <person name="Clark G."/>
            <person name="Clee C.M."/>
            <person name="Clegg S."/>
            <person name="Cobley V."/>
            <person name="Collier R.E."/>
            <person name="Collins J.E."/>
            <person name="Colman L.K."/>
            <person name="Corby N.R."/>
            <person name="Coville G.J."/>
            <person name="Culley K.M."/>
            <person name="Dhami P."/>
            <person name="Davies J."/>
            <person name="Dunn M."/>
            <person name="Earthrowl M.E."/>
            <person name="Ellington A.E."/>
            <person name="Evans K.A."/>
            <person name="Faulkner L."/>
            <person name="Francis M.D."/>
            <person name="Frankish A."/>
            <person name="Frankland J."/>
            <person name="French L."/>
            <person name="Garner P."/>
            <person name="Garnett J."/>
            <person name="Ghori M.J."/>
            <person name="Gilby L.M."/>
            <person name="Gillson C.J."/>
            <person name="Glithero R.J."/>
            <person name="Grafham D.V."/>
            <person name="Grant M."/>
            <person name="Gribble S."/>
            <person name="Griffiths C."/>
            <person name="Griffiths M.N.D."/>
            <person name="Hall R."/>
            <person name="Halls K.S."/>
            <person name="Hammond S."/>
            <person name="Harley J.L."/>
            <person name="Hart E.A."/>
            <person name="Heath P.D."/>
            <person name="Heathcott R."/>
            <person name="Holmes S.J."/>
            <person name="Howden P.J."/>
            <person name="Howe K.L."/>
            <person name="Howell G.R."/>
            <person name="Huckle E."/>
            <person name="Humphray S.J."/>
            <person name="Humphries M.D."/>
            <person name="Hunt A.R."/>
            <person name="Johnson C.M."/>
            <person name="Joy A.A."/>
            <person name="Kay M."/>
            <person name="Keenan S.J."/>
            <person name="Kimberley A.M."/>
            <person name="King A."/>
            <person name="Laird G.K."/>
            <person name="Langford C."/>
            <person name="Lawlor S."/>
            <person name="Leongamornlert D.A."/>
            <person name="Leversha M."/>
            <person name="Lloyd C.R."/>
            <person name="Lloyd D.M."/>
            <person name="Loveland J.E."/>
            <person name="Lovell J."/>
            <person name="Martin S."/>
            <person name="Mashreghi-Mohammadi M."/>
            <person name="Maslen G.L."/>
            <person name="Matthews L."/>
            <person name="McCann O.T."/>
            <person name="McLaren S.J."/>
            <person name="McLay K."/>
            <person name="McMurray A."/>
            <person name="Moore M.J.F."/>
            <person name="Mullikin J.C."/>
            <person name="Niblett D."/>
            <person name="Nickerson T."/>
            <person name="Novik K.L."/>
            <person name="Oliver K."/>
            <person name="Overton-Larty E.K."/>
            <person name="Parker A."/>
            <person name="Patel R."/>
            <person name="Pearce A.V."/>
            <person name="Peck A.I."/>
            <person name="Phillimore B.J.C.T."/>
            <person name="Phillips S."/>
            <person name="Plumb R.W."/>
            <person name="Porter K.M."/>
            <person name="Ramsey Y."/>
            <person name="Ranby S.A."/>
            <person name="Rice C.M."/>
            <person name="Ross M.T."/>
            <person name="Searle S.M."/>
            <person name="Sehra H.K."/>
            <person name="Sheridan E."/>
            <person name="Skuce C.D."/>
            <person name="Smith S."/>
            <person name="Smith M."/>
            <person name="Spraggon L."/>
            <person name="Squares S.L."/>
            <person name="Steward C.A."/>
            <person name="Sycamore N."/>
            <person name="Tamlyn-Hall G."/>
            <person name="Tester J."/>
            <person name="Theaker A.J."/>
            <person name="Thomas D.W."/>
            <person name="Thorpe A."/>
            <person name="Tracey A."/>
            <person name="Tromans A."/>
            <person name="Tubby B."/>
            <person name="Wall M."/>
            <person name="Wallis J.M."/>
            <person name="West A.P."/>
            <person name="White S.S."/>
            <person name="Whitehead S.L."/>
            <person name="Whittaker H."/>
            <person name="Wild A."/>
            <person name="Willey D.J."/>
            <person name="Wilmer T.E."/>
            <person name="Wood J.M."/>
            <person name="Wray P.W."/>
            <person name="Wyatt J.C."/>
            <person name="Young L."/>
            <person name="Younger R.M."/>
            <person name="Bentley D.R."/>
            <person name="Coulson A."/>
            <person name="Durbin R.M."/>
            <person name="Hubbard T."/>
            <person name="Sulston J.E."/>
            <person name="Dunham I."/>
            <person name="Rogers J."/>
            <person name="Beck S."/>
        </authorList>
    </citation>
    <scope>NUCLEOTIDE SEQUENCE [LARGE SCALE GENOMIC DNA]</scope>
</reference>
<reference key="5">
    <citation type="journal article" date="2004" name="Genome Res.">
        <title>The status, quality, and expansion of the NIH full-length cDNA project: the Mammalian Gene Collection (MGC).</title>
        <authorList>
            <consortium name="The MGC Project Team"/>
        </authorList>
    </citation>
    <scope>NUCLEOTIDE SEQUENCE [LARGE SCALE MRNA]</scope>
    <source>
        <tissue>Brain</tissue>
        <tissue>Mammary gland</tissue>
    </source>
</reference>
<reference key="6">
    <citation type="journal article" date="2005" name="Cell">
        <title>Centriolin anchoring of exocyst and SNARE complexes at the midbody is required for secretory-vesicle-mediated abscission.</title>
        <authorList>
            <person name="Gromley A."/>
            <person name="Yeaman C."/>
            <person name="Rosa J."/>
            <person name="Redick S."/>
            <person name="Chen C.-T."/>
            <person name="Mirabelle S."/>
            <person name="Guha M."/>
            <person name="Sillibourne J."/>
            <person name="Doxsey S.J."/>
        </authorList>
    </citation>
    <scope>SUBCELLULAR LOCATION</scope>
</reference>
<reference key="7">
    <citation type="journal article" date="2008" name="EMBO J.">
        <title>Distinct roles of RalA and RalB in the progression of cytokinesis are supported by distinct RalGEFs.</title>
        <authorList>
            <person name="Cascone I."/>
            <person name="Selimoglu R."/>
            <person name="Ozdemir C."/>
            <person name="Del Nery E."/>
            <person name="Yeaman C."/>
            <person name="White M."/>
            <person name="Camonis J."/>
        </authorList>
    </citation>
    <scope>INTERACTION WITH RALA AND RALB</scope>
    <scope>SUBCELLULAR LOCATION</scope>
    <scope>MUTAGENESIS OF THR-11</scope>
</reference>
<reference key="8">
    <citation type="journal article" date="2009" name="Biochemistry">
        <title>Solution structure and dynamics of the small GTPase RalB in its active conformation: significance for effector protein binding.</title>
        <authorList>
            <person name="Fenwick R.B."/>
            <person name="Prasannan S."/>
            <person name="Campbell L.J."/>
            <person name="Nietlispach D."/>
            <person name="Evetts K.A."/>
            <person name="Camonis J."/>
            <person name="Mott H.R."/>
            <person name="Owen D."/>
        </authorList>
    </citation>
    <scope>INTERACTION WITH RALB</scope>
</reference>
<reference key="9">
    <citation type="journal article" date="2009" name="Science">
        <title>Lysine acetylation targets protein complexes and co-regulates major cellular functions.</title>
        <authorList>
            <person name="Choudhary C."/>
            <person name="Kumar C."/>
            <person name="Gnad F."/>
            <person name="Nielsen M.L."/>
            <person name="Rehman M."/>
            <person name="Walther T.C."/>
            <person name="Olsen J.V."/>
            <person name="Mann M."/>
        </authorList>
    </citation>
    <scope>ACETYLATION [LARGE SCALE ANALYSIS] AT LYS-454</scope>
    <scope>IDENTIFICATION BY MASS SPECTROMETRY [LARGE SCALE ANALYSIS]</scope>
</reference>
<reference key="10">
    <citation type="journal article" date="2011" name="BMC Syst. Biol.">
        <title>Initial characterization of the human central proteome.</title>
        <authorList>
            <person name="Burkard T.R."/>
            <person name="Planyavsky M."/>
            <person name="Kaupe I."/>
            <person name="Breitwieser F.P."/>
            <person name="Buerckstuemmer T."/>
            <person name="Bennett K.L."/>
            <person name="Superti-Furga G."/>
            <person name="Colinge J."/>
        </authorList>
    </citation>
    <scope>IDENTIFICATION BY MASS SPECTROMETRY [LARGE SCALE ANALYSIS]</scope>
</reference>
<reference key="11">
    <citation type="journal article" date="2013" name="J. Proteome Res.">
        <title>Toward a comprehensive characterization of a human cancer cell phosphoproteome.</title>
        <authorList>
            <person name="Zhou H."/>
            <person name="Di Palma S."/>
            <person name="Preisinger C."/>
            <person name="Peng M."/>
            <person name="Polat A.N."/>
            <person name="Heck A.J."/>
            <person name="Mohammed S."/>
        </authorList>
    </citation>
    <scope>PHOSPHORYLATION [LARGE SCALE ANALYSIS] AT SER-431; SER-432; SER-435; THR-440 AND SER-888</scope>
    <scope>IDENTIFICATION BY MASS SPECTROMETRY [LARGE SCALE ANALYSIS]</scope>
    <source>
        <tissue>Cervix carcinoma</tissue>
        <tissue>Erythroleukemia</tissue>
    </source>
</reference>
<reference key="12">
    <citation type="journal article" date="2020" name="J. Exp. Med.">
        <title>Mutations in the exocyst component EXOC2 cause severe defects in human brain development.</title>
        <authorList>
            <person name="Van Bergen N.J."/>
            <person name="Ahmed S.M."/>
            <person name="Collins F."/>
            <person name="Cowley M."/>
            <person name="Vetro A."/>
            <person name="Dale R.C."/>
            <person name="Hock D.H."/>
            <person name="de Caestecker C."/>
            <person name="Menezes M."/>
            <person name="Massey S."/>
            <person name="Ho G."/>
            <person name="Pisano T."/>
            <person name="Glover S."/>
            <person name="Gusman J."/>
            <person name="Stroud D.A."/>
            <person name="Dinger M."/>
            <person name="Guerrini R."/>
            <person name="Macara I.G."/>
            <person name="Christodoulou J."/>
        </authorList>
    </citation>
    <scope>INVOLVEMENT IN NEDFACH</scope>
    <scope>VARIANTS NEDFACH HIS-130; 437-ARG--THR-924 DEL AND SER-580</scope>
    <scope>CHARACTERIZATION OF VARIANTS NEDFACH HIS-130; 437-ARG--THR-924 DEL AND SER-580</scope>
    <scope>FUNCTION</scope>
</reference>
<organism>
    <name type="scientific">Homo sapiens</name>
    <name type="common">Human</name>
    <dbReference type="NCBI Taxonomy" id="9606"/>
    <lineage>
        <taxon>Eukaryota</taxon>
        <taxon>Metazoa</taxon>
        <taxon>Chordata</taxon>
        <taxon>Craniata</taxon>
        <taxon>Vertebrata</taxon>
        <taxon>Euteleostomi</taxon>
        <taxon>Mammalia</taxon>
        <taxon>Eutheria</taxon>
        <taxon>Euarchontoglires</taxon>
        <taxon>Primates</taxon>
        <taxon>Haplorrhini</taxon>
        <taxon>Catarrhini</taxon>
        <taxon>Hominidae</taxon>
        <taxon>Homo</taxon>
    </lineage>
</organism>